<dbReference type="EMBL" id="X04693">
    <property type="protein sequence ID" value="CAA28398.1"/>
    <property type="molecule type" value="Genomic_DNA"/>
</dbReference>
<dbReference type="PIR" id="S00446">
    <property type="entry name" value="CUSP"/>
</dbReference>
<dbReference type="PDB" id="1AG6">
    <property type="method" value="X-ray"/>
    <property type="resolution" value="1.60 A"/>
    <property type="chains" value="A=70-168"/>
</dbReference>
<dbReference type="PDB" id="1OOW">
    <property type="method" value="X-ray"/>
    <property type="resolution" value="2.00 A"/>
    <property type="chains" value="A=70-168"/>
</dbReference>
<dbReference type="PDB" id="1TEF">
    <property type="method" value="X-ray"/>
    <property type="resolution" value="1.90 A"/>
    <property type="chains" value="A/B=70-168"/>
</dbReference>
<dbReference type="PDB" id="1TEG">
    <property type="method" value="X-ray"/>
    <property type="resolution" value="1.96 A"/>
    <property type="chains" value="A/B=70-168"/>
</dbReference>
<dbReference type="PDB" id="1YLB">
    <property type="method" value="NMR"/>
    <property type="chains" value="B=70-168"/>
</dbReference>
<dbReference type="PDB" id="2PCF">
    <property type="method" value="NMR"/>
    <property type="chains" value="A=70-168"/>
</dbReference>
<dbReference type="PDBsum" id="1AG6"/>
<dbReference type="PDBsum" id="1OOW"/>
<dbReference type="PDBsum" id="1TEF"/>
<dbReference type="PDBsum" id="1TEG"/>
<dbReference type="PDBsum" id="1YLB"/>
<dbReference type="PDBsum" id="2PCF"/>
<dbReference type="BMRB" id="P00289"/>
<dbReference type="SMR" id="P00289"/>
<dbReference type="IntAct" id="P00289">
    <property type="interactions" value="1"/>
</dbReference>
<dbReference type="MINT" id="P00289"/>
<dbReference type="OrthoDB" id="197281at2759"/>
<dbReference type="BioCyc" id="MetaCyc:MONOMER-4821"/>
<dbReference type="EvolutionaryTrace" id="P00289"/>
<dbReference type="Proteomes" id="UP001155700">
    <property type="component" value="Unplaced"/>
</dbReference>
<dbReference type="GO" id="GO:0009543">
    <property type="term" value="C:chloroplast thylakoid lumen"/>
    <property type="evidence" value="ECO:0007669"/>
    <property type="project" value="TreeGrafter"/>
</dbReference>
<dbReference type="GO" id="GO:0009535">
    <property type="term" value="C:chloroplast thylakoid membrane"/>
    <property type="evidence" value="ECO:0007669"/>
    <property type="project" value="UniProtKB-SubCell"/>
</dbReference>
<dbReference type="GO" id="GO:0005507">
    <property type="term" value="F:copper ion binding"/>
    <property type="evidence" value="ECO:0007669"/>
    <property type="project" value="InterPro"/>
</dbReference>
<dbReference type="GO" id="GO:0046028">
    <property type="term" value="F:electron transporter, transferring electrons from cytochrome b6/f complex of photosystem II activity"/>
    <property type="evidence" value="ECO:0007669"/>
    <property type="project" value="TreeGrafter"/>
</dbReference>
<dbReference type="CDD" id="cd04219">
    <property type="entry name" value="Plastocyanin"/>
    <property type="match status" value="1"/>
</dbReference>
<dbReference type="Gene3D" id="2.60.40.420">
    <property type="entry name" value="Cupredoxins - blue copper proteins"/>
    <property type="match status" value="1"/>
</dbReference>
<dbReference type="InterPro" id="IPR000923">
    <property type="entry name" value="BlueCu_1"/>
</dbReference>
<dbReference type="InterPro" id="IPR028871">
    <property type="entry name" value="BlueCu_1_BS"/>
</dbReference>
<dbReference type="InterPro" id="IPR001235">
    <property type="entry name" value="Copper_blue_Plastocyanin"/>
</dbReference>
<dbReference type="InterPro" id="IPR008972">
    <property type="entry name" value="Cupredoxin"/>
</dbReference>
<dbReference type="InterPro" id="IPR002387">
    <property type="entry name" value="Plastocyanin"/>
</dbReference>
<dbReference type="NCBIfam" id="TIGR02656">
    <property type="entry name" value="cyanin_plasto"/>
    <property type="match status" value="1"/>
</dbReference>
<dbReference type="PANTHER" id="PTHR34192">
    <property type="entry name" value="PLASTOCYANIN MAJOR ISOFORM, CHLOROPLASTIC-RELATED"/>
    <property type="match status" value="1"/>
</dbReference>
<dbReference type="PANTHER" id="PTHR34192:SF10">
    <property type="entry name" value="PLASTOCYANIN MAJOR ISOFORM, CHLOROPLASTIC-RELATED"/>
    <property type="match status" value="1"/>
</dbReference>
<dbReference type="Pfam" id="PF00127">
    <property type="entry name" value="Copper-bind"/>
    <property type="match status" value="1"/>
</dbReference>
<dbReference type="PRINTS" id="PR00156">
    <property type="entry name" value="COPPERBLUE"/>
</dbReference>
<dbReference type="PRINTS" id="PR00157">
    <property type="entry name" value="PLASTOCYANIN"/>
</dbReference>
<dbReference type="SUPFAM" id="SSF49503">
    <property type="entry name" value="Cupredoxins"/>
    <property type="match status" value="1"/>
</dbReference>
<dbReference type="PROSITE" id="PS00196">
    <property type="entry name" value="COPPER_BLUE"/>
    <property type="match status" value="1"/>
</dbReference>
<name>PLAS_SPIOL</name>
<gene>
    <name type="primary">PETE</name>
</gene>
<accession>P00289</accession>
<sequence length="168" mass="16917">MATVASSAAVAVPSFTGLKASGSIKPTTAKIIPTTTAVPRLSVKASLKNVGAAVVATAAAGLLAGNAMAVEVLLGGGDGSLAFLPGDFSVASGEEIVFKNNAGFPHNVVFDEDEIPSGVDAAKISMSEEDLLNAPGETYKVTLTEKGTYKFYCSPHQGAGMVGKVTVN</sequence>
<reference key="1">
    <citation type="journal article" date="1986" name="Curr. Genet.">
        <title>Plastocyanin is encoded by an uninterrupted nuclear gene in spinach.</title>
        <authorList>
            <person name="Rother C."/>
            <person name="Jansen T."/>
            <person name="Tyagi A."/>
            <person name="Tittgen J."/>
            <person name="Herrmann R.G."/>
        </authorList>
    </citation>
    <scope>NUCLEOTIDE SEQUENCE [GENOMIC DNA]</scope>
</reference>
<reference key="2">
    <citation type="journal article" date="1975" name="Biochem. J.">
        <title>The amino acid sequence of plastocyanin from spinach. (Spinacia oleracea L.).</title>
        <authorList>
            <person name="Scawen M.D."/>
            <person name="Ramshaw J.A.M."/>
            <person name="Boulter D."/>
        </authorList>
    </citation>
    <scope>PROTEIN SEQUENCE OF 70-168</scope>
    <scope>SUBCELLULAR LOCATION</scope>
</reference>
<reference key="3">
    <citation type="journal article" date="2002" name="J. Biol. Chem.">
        <title>Proteome map of the chloroplast lumen of Arabidopsis thaliana.</title>
        <authorList>
            <person name="Schubert M."/>
            <person name="Petersson U.A."/>
            <person name="Haas B.J."/>
            <person name="Funk C."/>
            <person name="Schroeder W.P."/>
            <person name="Kieselbach T."/>
        </authorList>
    </citation>
    <scope>PROTEIN SEQUENCE OF 70-76</scope>
    <scope>SUBCELLULAR LOCATION</scope>
    <source>
        <tissue>Leaf</tissue>
    </source>
</reference>
<reference key="4">
    <citation type="journal article" date="1998" name="Structure">
        <title>The structure of the complex of plastocyanin and cytochrome f, determined by paramagnetic NMR and restrained rigid-body molecular dynamics.</title>
        <authorList>
            <person name="Ubbink M."/>
            <person name="Ejdebaeck M."/>
            <person name="Karlsson B.G."/>
            <person name="Bendall D.S."/>
        </authorList>
    </citation>
    <scope>STRUCTURE BY NMR</scope>
    <scope>SUBCELLULAR LOCATION</scope>
</reference>
<reference key="5">
    <citation type="journal article" date="1998" name="Protein Sci.">
        <title>Crystal structure of spinach plastocyanin at 1.7-A resolution.</title>
        <authorList>
            <person name="Xue Y."/>
            <person name="Okvist M."/>
            <person name="Hansson O."/>
            <person name="Young S."/>
        </authorList>
    </citation>
    <scope>X-RAY CRYSTALLOGRAPHY (1.7 ANGSTROMS) OF 70-168 IN COMPLEX WITH COPPER</scope>
    <scope>FUNCTION</scope>
    <scope>COFACTOR</scope>
    <scope>SUBCELLULAR LOCATION</scope>
</reference>
<feature type="transit peptide" description="Chloroplast">
    <location>
        <begin position="1"/>
        <end status="unknown"/>
    </location>
</feature>
<feature type="transit peptide" description="Thylakoid">
    <location>
        <begin status="unknown"/>
        <end position="69"/>
    </location>
</feature>
<feature type="chain" id="PRO_0000002897" description="Plastocyanin, chloroplastic">
    <location>
        <begin position="70"/>
        <end position="168"/>
    </location>
</feature>
<feature type="domain" description="Plastocyanin-like">
    <location>
        <begin position="70"/>
        <end position="168"/>
    </location>
</feature>
<feature type="binding site" evidence="4">
    <location>
        <position position="106"/>
    </location>
    <ligand>
        <name>Cu cation</name>
        <dbReference type="ChEBI" id="CHEBI:23378"/>
    </ligand>
</feature>
<feature type="binding site" evidence="4">
    <location>
        <position position="153"/>
    </location>
    <ligand>
        <name>Cu cation</name>
        <dbReference type="ChEBI" id="CHEBI:23378"/>
    </ligand>
</feature>
<feature type="binding site" evidence="4">
    <location>
        <position position="156"/>
    </location>
    <ligand>
        <name>Cu cation</name>
        <dbReference type="ChEBI" id="CHEBI:23378"/>
    </ligand>
</feature>
<feature type="binding site" evidence="4">
    <location>
        <position position="161"/>
    </location>
    <ligand>
        <name>Cu cation</name>
        <dbReference type="ChEBI" id="CHEBI:23378"/>
    </ligand>
</feature>
<feature type="strand" evidence="6">
    <location>
        <begin position="71"/>
        <end position="75"/>
    </location>
</feature>
<feature type="turn" evidence="7">
    <location>
        <begin position="76"/>
        <end position="79"/>
    </location>
</feature>
<feature type="strand" evidence="6">
    <location>
        <begin position="83"/>
        <end position="90"/>
    </location>
</feature>
<feature type="strand" evidence="6">
    <location>
        <begin position="95"/>
        <end position="100"/>
    </location>
</feature>
<feature type="strand" evidence="7">
    <location>
        <begin position="102"/>
        <end position="104"/>
    </location>
</feature>
<feature type="strand" evidence="8">
    <location>
        <begin position="108"/>
        <end position="110"/>
    </location>
</feature>
<feature type="helix" evidence="6">
    <location>
        <begin position="112"/>
        <end position="114"/>
    </location>
</feature>
<feature type="helix" evidence="6">
    <location>
        <begin position="121"/>
        <end position="124"/>
    </location>
</feature>
<feature type="strand" evidence="8">
    <location>
        <begin position="128"/>
        <end position="130"/>
    </location>
</feature>
<feature type="strand" evidence="6">
    <location>
        <begin position="138"/>
        <end position="142"/>
    </location>
</feature>
<feature type="strand" evidence="6">
    <location>
        <begin position="147"/>
        <end position="152"/>
    </location>
</feature>
<feature type="helix" evidence="6">
    <location>
        <begin position="154"/>
        <end position="156"/>
    </location>
</feature>
<feature type="turn" evidence="6">
    <location>
        <begin position="157"/>
        <end position="160"/>
    </location>
</feature>
<feature type="strand" evidence="6">
    <location>
        <begin position="162"/>
        <end position="167"/>
    </location>
</feature>
<keyword id="KW-0002">3D-structure</keyword>
<keyword id="KW-0150">Chloroplast</keyword>
<keyword id="KW-0186">Copper</keyword>
<keyword id="KW-0903">Direct protein sequencing</keyword>
<keyword id="KW-0249">Electron transport</keyword>
<keyword id="KW-0472">Membrane</keyword>
<keyword id="KW-0479">Metal-binding</keyword>
<keyword id="KW-0934">Plastid</keyword>
<keyword id="KW-1185">Reference proteome</keyword>
<keyword id="KW-0793">Thylakoid</keyword>
<keyword id="KW-0809">Transit peptide</keyword>
<keyword id="KW-0813">Transport</keyword>
<organism>
    <name type="scientific">Spinacia oleracea</name>
    <name type="common">Spinach</name>
    <dbReference type="NCBI Taxonomy" id="3562"/>
    <lineage>
        <taxon>Eukaryota</taxon>
        <taxon>Viridiplantae</taxon>
        <taxon>Streptophyta</taxon>
        <taxon>Embryophyta</taxon>
        <taxon>Tracheophyta</taxon>
        <taxon>Spermatophyta</taxon>
        <taxon>Magnoliopsida</taxon>
        <taxon>eudicotyledons</taxon>
        <taxon>Gunneridae</taxon>
        <taxon>Pentapetalae</taxon>
        <taxon>Caryophyllales</taxon>
        <taxon>Chenopodiaceae</taxon>
        <taxon>Chenopodioideae</taxon>
        <taxon>Anserineae</taxon>
        <taxon>Spinacia</taxon>
    </lineage>
</organism>
<evidence type="ECO:0000269" key="1">
    <source>
    </source>
</evidence>
<evidence type="ECO:0000269" key="2">
    <source>
    </source>
</evidence>
<evidence type="ECO:0000269" key="3">
    <source>
    </source>
</evidence>
<evidence type="ECO:0000269" key="4">
    <source>
    </source>
</evidence>
<evidence type="ECO:0000305" key="5"/>
<evidence type="ECO:0007829" key="6">
    <source>
        <dbReference type="PDB" id="1AG6"/>
    </source>
</evidence>
<evidence type="ECO:0007829" key="7">
    <source>
        <dbReference type="PDB" id="1YLB"/>
    </source>
</evidence>
<evidence type="ECO:0007829" key="8">
    <source>
        <dbReference type="PDB" id="2PCF"/>
    </source>
</evidence>
<comment type="function">
    <text evidence="4">Participates in electron transfer between P700 and the cytochrome b6-f complex in photosystem I.</text>
</comment>
<comment type="cofactor">
    <cofactor evidence="4">
        <name>Cu(2+)</name>
        <dbReference type="ChEBI" id="CHEBI:29036"/>
    </cofactor>
</comment>
<comment type="subcellular location">
    <subcellularLocation>
        <location evidence="1 2 3 4">Plastid</location>
        <location evidence="1 2 3 4">Chloroplast thylakoid membrane</location>
        <topology evidence="1 2 3 4">Peripheral membrane protein</topology>
        <orientation evidence="1 2 3 4">Lumenal side</orientation>
    </subcellularLocation>
    <text>Loosely bound to the inner thylakoid membrane surface in chloroplasts (PubMed:9551554, PubMed:9792096).</text>
</comment>
<comment type="similarity">
    <text evidence="5">Belongs to the plastocyanin family.</text>
</comment>
<protein>
    <recommendedName>
        <fullName>Plastocyanin, chloroplastic</fullName>
    </recommendedName>
</protein>
<proteinExistence type="evidence at protein level"/>